<dbReference type="EC" id="2.3.1.117" evidence="1"/>
<dbReference type="EMBL" id="CP000468">
    <property type="protein sequence ID" value="ABI99649.1"/>
    <property type="molecule type" value="Genomic_DNA"/>
</dbReference>
<dbReference type="RefSeq" id="WP_001186656.1">
    <property type="nucleotide sequence ID" value="NZ_CADILS010000027.1"/>
</dbReference>
<dbReference type="SMR" id="A1A7L0"/>
<dbReference type="KEGG" id="ecv:APECO1_1821"/>
<dbReference type="HOGENOM" id="CLU_050859_0_1_6"/>
<dbReference type="UniPathway" id="UPA00034">
    <property type="reaction ID" value="UER00019"/>
</dbReference>
<dbReference type="Proteomes" id="UP000008216">
    <property type="component" value="Chromosome"/>
</dbReference>
<dbReference type="GO" id="GO:0005737">
    <property type="term" value="C:cytoplasm"/>
    <property type="evidence" value="ECO:0007669"/>
    <property type="project" value="UniProtKB-SubCell"/>
</dbReference>
<dbReference type="GO" id="GO:0008666">
    <property type="term" value="F:2,3,4,5-tetrahydropyridine-2,6-dicarboxylate N-succinyltransferase activity"/>
    <property type="evidence" value="ECO:0007669"/>
    <property type="project" value="UniProtKB-UniRule"/>
</dbReference>
<dbReference type="GO" id="GO:0016779">
    <property type="term" value="F:nucleotidyltransferase activity"/>
    <property type="evidence" value="ECO:0007669"/>
    <property type="project" value="TreeGrafter"/>
</dbReference>
<dbReference type="GO" id="GO:0019877">
    <property type="term" value="P:diaminopimelate biosynthetic process"/>
    <property type="evidence" value="ECO:0007669"/>
    <property type="project" value="UniProtKB-UniRule"/>
</dbReference>
<dbReference type="GO" id="GO:0009089">
    <property type="term" value="P:lysine biosynthetic process via diaminopimelate"/>
    <property type="evidence" value="ECO:0007669"/>
    <property type="project" value="UniProtKB-UniRule"/>
</dbReference>
<dbReference type="CDD" id="cd03350">
    <property type="entry name" value="LbH_THP_succinylT"/>
    <property type="match status" value="1"/>
</dbReference>
<dbReference type="FunFam" id="1.10.166.10:FF:000001">
    <property type="entry name" value="2,3,4,5-tetrahydropyridine-2,6-dicarboxylate N-succinyltransferase"/>
    <property type="match status" value="1"/>
</dbReference>
<dbReference type="FunFam" id="2.160.10.10:FF:000004">
    <property type="entry name" value="2,3,4,5-tetrahydropyridine-2,6-dicarboxylate N-succinyltransferase"/>
    <property type="match status" value="1"/>
</dbReference>
<dbReference type="Gene3D" id="2.160.10.10">
    <property type="entry name" value="Hexapeptide repeat proteins"/>
    <property type="match status" value="1"/>
</dbReference>
<dbReference type="Gene3D" id="1.10.166.10">
    <property type="entry name" value="Tetrahydrodipicolinate-N-succinyltransferase, N-terminal domain"/>
    <property type="match status" value="1"/>
</dbReference>
<dbReference type="HAMAP" id="MF_00811">
    <property type="entry name" value="DapD"/>
    <property type="match status" value="1"/>
</dbReference>
<dbReference type="InterPro" id="IPR005664">
    <property type="entry name" value="DapD_Trfase_Hexpep_rpt_fam"/>
</dbReference>
<dbReference type="InterPro" id="IPR001451">
    <property type="entry name" value="Hexapep"/>
</dbReference>
<dbReference type="InterPro" id="IPR018357">
    <property type="entry name" value="Hexapep_transf_CS"/>
</dbReference>
<dbReference type="InterPro" id="IPR023180">
    <property type="entry name" value="THP_succinylTrfase_dom1"/>
</dbReference>
<dbReference type="InterPro" id="IPR037133">
    <property type="entry name" value="THP_succinylTrfase_N_sf"/>
</dbReference>
<dbReference type="InterPro" id="IPR011004">
    <property type="entry name" value="Trimer_LpxA-like_sf"/>
</dbReference>
<dbReference type="NCBIfam" id="TIGR00965">
    <property type="entry name" value="dapD"/>
    <property type="match status" value="1"/>
</dbReference>
<dbReference type="NCBIfam" id="NF008808">
    <property type="entry name" value="PRK11830.1"/>
    <property type="match status" value="1"/>
</dbReference>
<dbReference type="PANTHER" id="PTHR19136:SF52">
    <property type="entry name" value="2,3,4,5-TETRAHYDROPYRIDINE-2,6-DICARBOXYLATE N-SUCCINYLTRANSFERASE"/>
    <property type="match status" value="1"/>
</dbReference>
<dbReference type="PANTHER" id="PTHR19136">
    <property type="entry name" value="MOLYBDENUM COFACTOR GUANYLYLTRANSFERASE"/>
    <property type="match status" value="1"/>
</dbReference>
<dbReference type="Pfam" id="PF14602">
    <property type="entry name" value="Hexapep_2"/>
    <property type="match status" value="1"/>
</dbReference>
<dbReference type="Pfam" id="PF14805">
    <property type="entry name" value="THDPS_N_2"/>
    <property type="match status" value="1"/>
</dbReference>
<dbReference type="SUPFAM" id="SSF51161">
    <property type="entry name" value="Trimeric LpxA-like enzymes"/>
    <property type="match status" value="1"/>
</dbReference>
<dbReference type="PROSITE" id="PS00101">
    <property type="entry name" value="HEXAPEP_TRANSFERASES"/>
    <property type="match status" value="1"/>
</dbReference>
<proteinExistence type="inferred from homology"/>
<accession>A1A7L0</accession>
<gene>
    <name evidence="1" type="primary">dapD</name>
    <name type="ordered locus">Ecok1_01560</name>
    <name type="ORF">APECO1_1821</name>
</gene>
<comment type="catalytic activity">
    <reaction evidence="1">
        <text>(S)-2,3,4,5-tetrahydrodipicolinate + succinyl-CoA + H2O = (S)-2-succinylamino-6-oxoheptanedioate + CoA</text>
        <dbReference type="Rhea" id="RHEA:17325"/>
        <dbReference type="ChEBI" id="CHEBI:15377"/>
        <dbReference type="ChEBI" id="CHEBI:15685"/>
        <dbReference type="ChEBI" id="CHEBI:16845"/>
        <dbReference type="ChEBI" id="CHEBI:57287"/>
        <dbReference type="ChEBI" id="CHEBI:57292"/>
        <dbReference type="EC" id="2.3.1.117"/>
    </reaction>
</comment>
<comment type="pathway">
    <text evidence="1">Amino-acid biosynthesis; L-lysine biosynthesis via DAP pathway; LL-2,6-diaminopimelate from (S)-tetrahydrodipicolinate (succinylase route): step 1/3.</text>
</comment>
<comment type="subunit">
    <text evidence="1">Homotrimer.</text>
</comment>
<comment type="subcellular location">
    <subcellularLocation>
        <location evidence="1">Cytoplasm</location>
    </subcellularLocation>
</comment>
<comment type="similarity">
    <text evidence="1">Belongs to the transferase hexapeptide repeat family.</text>
</comment>
<evidence type="ECO:0000255" key="1">
    <source>
        <dbReference type="HAMAP-Rule" id="MF_00811"/>
    </source>
</evidence>
<sequence length="274" mass="29891">MQQLQNIIETAFERRAEITPANADTVTREAVNQVIALLDSGALRVAEKIDGQWVTHQWLKKAVLLSFRINDNQVIEGAESRYFDKVPMKFANYDEARFQKEGFRVVPPAAVRQGAFIARNTVLMPSYVNIGAYVDEGTMVDTWATVGSCAQIGKNVHLSGGVGIGGVLEPLQANPTIIEDNCFIGARSEVVEGVIVEEGSVISMGVYIGQSTRIYDRETGEIHYGRVPAGSVVVSGNLPSKDGKYSLYCAVIVKKVDAKTRGKVGINELLRTID</sequence>
<feature type="chain" id="PRO_1000047137" description="2,3,4,5-tetrahydropyridine-2,6-dicarboxylate N-succinyltransferase">
    <location>
        <begin position="1"/>
        <end position="274"/>
    </location>
</feature>
<feature type="binding site" evidence="1">
    <location>
        <position position="104"/>
    </location>
    <ligand>
        <name>substrate</name>
    </ligand>
</feature>
<feature type="binding site" evidence="1">
    <location>
        <position position="141"/>
    </location>
    <ligand>
        <name>substrate</name>
    </ligand>
</feature>
<reference key="1">
    <citation type="journal article" date="2007" name="J. Bacteriol.">
        <title>The genome sequence of avian pathogenic Escherichia coli strain O1:K1:H7 shares strong similarities with human extraintestinal pathogenic E. coli genomes.</title>
        <authorList>
            <person name="Johnson T.J."/>
            <person name="Kariyawasam S."/>
            <person name="Wannemuehler Y."/>
            <person name="Mangiamele P."/>
            <person name="Johnson S.J."/>
            <person name="Doetkott C."/>
            <person name="Skyberg J.A."/>
            <person name="Lynne A.M."/>
            <person name="Johnson J.R."/>
            <person name="Nolan L.K."/>
        </authorList>
    </citation>
    <scope>NUCLEOTIDE SEQUENCE [LARGE SCALE GENOMIC DNA]</scope>
</reference>
<keyword id="KW-0012">Acyltransferase</keyword>
<keyword id="KW-0028">Amino-acid biosynthesis</keyword>
<keyword id="KW-0963">Cytoplasm</keyword>
<keyword id="KW-0220">Diaminopimelate biosynthesis</keyword>
<keyword id="KW-0457">Lysine biosynthesis</keyword>
<keyword id="KW-1185">Reference proteome</keyword>
<keyword id="KW-0677">Repeat</keyword>
<keyword id="KW-0808">Transferase</keyword>
<protein>
    <recommendedName>
        <fullName evidence="1">2,3,4,5-tetrahydropyridine-2,6-dicarboxylate N-succinyltransferase</fullName>
        <ecNumber evidence="1">2.3.1.117</ecNumber>
    </recommendedName>
    <alternativeName>
        <fullName evidence="1">Tetrahydrodipicolinate N-succinyltransferase</fullName>
        <shortName evidence="1">THDP succinyltransferase</shortName>
        <shortName evidence="1">THP succinyltransferase</shortName>
        <shortName evidence="1">Tetrahydropicolinate succinylase</shortName>
    </alternativeName>
</protein>
<name>DAPD_ECOK1</name>
<organism>
    <name type="scientific">Escherichia coli O1:K1 / APEC</name>
    <dbReference type="NCBI Taxonomy" id="405955"/>
    <lineage>
        <taxon>Bacteria</taxon>
        <taxon>Pseudomonadati</taxon>
        <taxon>Pseudomonadota</taxon>
        <taxon>Gammaproteobacteria</taxon>
        <taxon>Enterobacterales</taxon>
        <taxon>Enterobacteriaceae</taxon>
        <taxon>Escherichia</taxon>
    </lineage>
</organism>